<keyword id="KW-0963">Cytoplasm</keyword>
<keyword id="KW-0255">Endonuclease</keyword>
<keyword id="KW-0378">Hydrolase</keyword>
<keyword id="KW-0464">Manganese</keyword>
<keyword id="KW-0479">Metal-binding</keyword>
<keyword id="KW-0540">Nuclease</keyword>
<keyword id="KW-1185">Reference proteome</keyword>
<sequence length="259" mass="27525">MLSTPPKLPSAHGPVHFPRRSGTGMNRMARSATAVKTLAGLSFKRERAVLKSGMAPVAGADEAGRGPLAGPVVAAAVILDPKRIPAGLDDSKKLTATRREALFDEICATAEVSVVMAPPSRIDRDNIRQATLWALANAVKGLPEDPRLVFVDGNDRPPLECEVEMVIGGDGLIASIAAASIVAKVTRDRLMVGLGAAFPGYGFERHMGYGTAEHGAALRRLGPCRHHRTSFAPVRAQQLVLFETEMLEIEAEPLVDALV</sequence>
<comment type="function">
    <text evidence="1">Endonuclease that specifically degrades the RNA of RNA-DNA hybrids.</text>
</comment>
<comment type="catalytic activity">
    <reaction evidence="1">
        <text>Endonucleolytic cleavage to 5'-phosphomonoester.</text>
        <dbReference type="EC" id="3.1.26.4"/>
    </reaction>
</comment>
<comment type="cofactor">
    <cofactor evidence="1">
        <name>Mn(2+)</name>
        <dbReference type="ChEBI" id="CHEBI:29035"/>
    </cofactor>
    <cofactor evidence="1">
        <name>Mg(2+)</name>
        <dbReference type="ChEBI" id="CHEBI:18420"/>
    </cofactor>
    <text evidence="1">Manganese or magnesium. Binds 1 divalent metal ion per monomer in the absence of substrate. May bind a second metal ion after substrate binding.</text>
</comment>
<comment type="subcellular location">
    <subcellularLocation>
        <location evidence="1">Cytoplasm</location>
    </subcellularLocation>
</comment>
<comment type="similarity">
    <text evidence="1">Belongs to the RNase HII family.</text>
</comment>
<name>RNH2_AZOC5</name>
<feature type="chain" id="PRO_0000334863" description="Ribonuclease HII">
    <location>
        <begin position="1"/>
        <end position="259"/>
    </location>
</feature>
<feature type="domain" description="RNase H type-2" evidence="2">
    <location>
        <begin position="55"/>
        <end position="243"/>
    </location>
</feature>
<feature type="region of interest" description="Disordered" evidence="3">
    <location>
        <begin position="1"/>
        <end position="26"/>
    </location>
</feature>
<feature type="binding site" evidence="1">
    <location>
        <position position="61"/>
    </location>
    <ligand>
        <name>a divalent metal cation</name>
        <dbReference type="ChEBI" id="CHEBI:60240"/>
    </ligand>
</feature>
<feature type="binding site" evidence="1">
    <location>
        <position position="62"/>
    </location>
    <ligand>
        <name>a divalent metal cation</name>
        <dbReference type="ChEBI" id="CHEBI:60240"/>
    </ligand>
</feature>
<feature type="binding site" evidence="1">
    <location>
        <position position="152"/>
    </location>
    <ligand>
        <name>a divalent metal cation</name>
        <dbReference type="ChEBI" id="CHEBI:60240"/>
    </ligand>
</feature>
<evidence type="ECO:0000255" key="1">
    <source>
        <dbReference type="HAMAP-Rule" id="MF_00052"/>
    </source>
</evidence>
<evidence type="ECO:0000255" key="2">
    <source>
        <dbReference type="PROSITE-ProRule" id="PRU01319"/>
    </source>
</evidence>
<evidence type="ECO:0000256" key="3">
    <source>
        <dbReference type="SAM" id="MobiDB-lite"/>
    </source>
</evidence>
<protein>
    <recommendedName>
        <fullName evidence="1">Ribonuclease HII</fullName>
        <shortName evidence="1">RNase HII</shortName>
        <ecNumber evidence="1">3.1.26.4</ecNumber>
    </recommendedName>
</protein>
<reference key="1">
    <citation type="submission" date="2007-04" db="EMBL/GenBank/DDBJ databases">
        <title>Complete genome sequence of the nitrogen-fixing bacterium Azorhizobium caulinodans ORS571.</title>
        <authorList>
            <person name="Lee K.B."/>
            <person name="Backer P.D."/>
            <person name="Aono T."/>
            <person name="Liu C.T."/>
            <person name="Suzuki S."/>
            <person name="Suzuki T."/>
            <person name="Kaneko T."/>
            <person name="Yamada M."/>
            <person name="Tabata S."/>
            <person name="Kupfer D.M."/>
            <person name="Najar F.Z."/>
            <person name="Wiley G.B."/>
            <person name="Roe B."/>
            <person name="Binnewies T."/>
            <person name="Ussery D."/>
            <person name="Vereecke D."/>
            <person name="Gevers D."/>
            <person name="Holsters M."/>
            <person name="Oyaizu H."/>
        </authorList>
    </citation>
    <scope>NUCLEOTIDE SEQUENCE [LARGE SCALE GENOMIC DNA]</scope>
    <source>
        <strain>ATCC 43989 / DSM 5975 / JCM 20966 / LMG 6465 / NBRC 14845 / NCIMB 13405 / ORS 571</strain>
    </source>
</reference>
<dbReference type="EC" id="3.1.26.4" evidence="1"/>
<dbReference type="EMBL" id="AP009384">
    <property type="protein sequence ID" value="BAF88396.1"/>
    <property type="molecule type" value="Genomic_DNA"/>
</dbReference>
<dbReference type="SMR" id="A8I6E6"/>
<dbReference type="STRING" id="438753.AZC_2398"/>
<dbReference type="KEGG" id="azc:AZC_2398"/>
<dbReference type="eggNOG" id="COG0164">
    <property type="taxonomic scope" value="Bacteria"/>
</dbReference>
<dbReference type="HOGENOM" id="CLU_036532_2_2_5"/>
<dbReference type="Proteomes" id="UP000000270">
    <property type="component" value="Chromosome"/>
</dbReference>
<dbReference type="GO" id="GO:0005737">
    <property type="term" value="C:cytoplasm"/>
    <property type="evidence" value="ECO:0007669"/>
    <property type="project" value="UniProtKB-SubCell"/>
</dbReference>
<dbReference type="GO" id="GO:0032299">
    <property type="term" value="C:ribonuclease H2 complex"/>
    <property type="evidence" value="ECO:0007669"/>
    <property type="project" value="TreeGrafter"/>
</dbReference>
<dbReference type="GO" id="GO:0030145">
    <property type="term" value="F:manganese ion binding"/>
    <property type="evidence" value="ECO:0007669"/>
    <property type="project" value="UniProtKB-UniRule"/>
</dbReference>
<dbReference type="GO" id="GO:0003723">
    <property type="term" value="F:RNA binding"/>
    <property type="evidence" value="ECO:0007669"/>
    <property type="project" value="InterPro"/>
</dbReference>
<dbReference type="GO" id="GO:0004523">
    <property type="term" value="F:RNA-DNA hybrid ribonuclease activity"/>
    <property type="evidence" value="ECO:0007669"/>
    <property type="project" value="UniProtKB-UniRule"/>
</dbReference>
<dbReference type="GO" id="GO:0043137">
    <property type="term" value="P:DNA replication, removal of RNA primer"/>
    <property type="evidence" value="ECO:0007669"/>
    <property type="project" value="TreeGrafter"/>
</dbReference>
<dbReference type="GO" id="GO:0006298">
    <property type="term" value="P:mismatch repair"/>
    <property type="evidence" value="ECO:0007669"/>
    <property type="project" value="TreeGrafter"/>
</dbReference>
<dbReference type="CDD" id="cd07182">
    <property type="entry name" value="RNase_HII_bacteria_HII_like"/>
    <property type="match status" value="1"/>
</dbReference>
<dbReference type="Gene3D" id="3.30.420.10">
    <property type="entry name" value="Ribonuclease H-like superfamily/Ribonuclease H"/>
    <property type="match status" value="1"/>
</dbReference>
<dbReference type="HAMAP" id="MF_00052_B">
    <property type="entry name" value="RNase_HII_B"/>
    <property type="match status" value="1"/>
</dbReference>
<dbReference type="InterPro" id="IPR022898">
    <property type="entry name" value="RNase_HII"/>
</dbReference>
<dbReference type="InterPro" id="IPR001352">
    <property type="entry name" value="RNase_HII/HIII"/>
</dbReference>
<dbReference type="InterPro" id="IPR024567">
    <property type="entry name" value="RNase_HII/HIII_dom"/>
</dbReference>
<dbReference type="InterPro" id="IPR012337">
    <property type="entry name" value="RNaseH-like_sf"/>
</dbReference>
<dbReference type="InterPro" id="IPR036397">
    <property type="entry name" value="RNaseH_sf"/>
</dbReference>
<dbReference type="NCBIfam" id="NF000595">
    <property type="entry name" value="PRK00015.1-3"/>
    <property type="match status" value="1"/>
</dbReference>
<dbReference type="PANTHER" id="PTHR10954">
    <property type="entry name" value="RIBONUCLEASE H2 SUBUNIT A"/>
    <property type="match status" value="1"/>
</dbReference>
<dbReference type="PANTHER" id="PTHR10954:SF18">
    <property type="entry name" value="RIBONUCLEASE HII"/>
    <property type="match status" value="1"/>
</dbReference>
<dbReference type="Pfam" id="PF01351">
    <property type="entry name" value="RNase_HII"/>
    <property type="match status" value="1"/>
</dbReference>
<dbReference type="SUPFAM" id="SSF53098">
    <property type="entry name" value="Ribonuclease H-like"/>
    <property type="match status" value="1"/>
</dbReference>
<dbReference type="PROSITE" id="PS51975">
    <property type="entry name" value="RNASE_H_2"/>
    <property type="match status" value="1"/>
</dbReference>
<accession>A8I6E6</accession>
<organism>
    <name type="scientific">Azorhizobium caulinodans (strain ATCC 43989 / DSM 5975 / JCM 20966 / LMG 6465 / NBRC 14845 / NCIMB 13405 / ORS 571)</name>
    <dbReference type="NCBI Taxonomy" id="438753"/>
    <lineage>
        <taxon>Bacteria</taxon>
        <taxon>Pseudomonadati</taxon>
        <taxon>Pseudomonadota</taxon>
        <taxon>Alphaproteobacteria</taxon>
        <taxon>Hyphomicrobiales</taxon>
        <taxon>Xanthobacteraceae</taxon>
        <taxon>Azorhizobium</taxon>
    </lineage>
</organism>
<gene>
    <name evidence="1" type="primary">rnhB</name>
    <name type="ordered locus">AZC_2398</name>
</gene>
<proteinExistence type="inferred from homology"/>